<proteinExistence type="inferred from homology"/>
<organism>
    <name type="scientific">Aspergillus fumigatus (strain ATCC MYA-4609 / CBS 101355 / FGSC A1100 / Af293)</name>
    <name type="common">Neosartorya fumigata</name>
    <dbReference type="NCBI Taxonomy" id="330879"/>
    <lineage>
        <taxon>Eukaryota</taxon>
        <taxon>Fungi</taxon>
        <taxon>Dikarya</taxon>
        <taxon>Ascomycota</taxon>
        <taxon>Pezizomycotina</taxon>
        <taxon>Eurotiomycetes</taxon>
        <taxon>Eurotiomycetidae</taxon>
        <taxon>Eurotiales</taxon>
        <taxon>Aspergillaceae</taxon>
        <taxon>Aspergillus</taxon>
        <taxon>Aspergillus subgen. Fumigati</taxon>
    </lineage>
</organism>
<name>TVP38_ASPFU</name>
<comment type="function">
    <text>Golgi membrane protein involved in vesicular trafficking and spindle migration.</text>
</comment>
<comment type="subcellular location">
    <subcellularLocation>
        <location>Golgi apparatus membrane</location>
        <topology>Multi-pass membrane protein</topology>
    </subcellularLocation>
</comment>
<comment type="domain">
    <text evidence="1">The VTT domain was previously called the SNARE-assoc domain. As there is no evidence that this domain associates with SNARE proteins, it was renamed as VMP1, TMEM41, and TVP38 (VTT) domain.</text>
</comment>
<comment type="similarity">
    <text evidence="4">Belongs to the TVP38/TMEM64 family.</text>
</comment>
<protein>
    <recommendedName>
        <fullName>Golgi apparatus membrane protein tvp38</fullName>
    </recommendedName>
</protein>
<gene>
    <name type="primary">tvp38</name>
    <name type="ORF">AFUA_4G13010</name>
</gene>
<accession>Q4WQJ2</accession>
<dbReference type="EMBL" id="AAHF01000005">
    <property type="protein sequence ID" value="EAL89492.1"/>
    <property type="molecule type" value="Genomic_DNA"/>
</dbReference>
<dbReference type="RefSeq" id="XP_751530.1">
    <property type="nucleotide sequence ID" value="XM_746437.1"/>
</dbReference>
<dbReference type="FunCoup" id="Q4WQJ2">
    <property type="interactions" value="111"/>
</dbReference>
<dbReference type="STRING" id="330879.Q4WQJ2"/>
<dbReference type="EnsemblFungi" id="EAL89492">
    <property type="protein sequence ID" value="EAL89492"/>
    <property type="gene ID" value="AFUA_4G13010"/>
</dbReference>
<dbReference type="GeneID" id="3509185"/>
<dbReference type="KEGG" id="afm:AFUA_4G13010"/>
<dbReference type="VEuPathDB" id="FungiDB:Afu4g13010"/>
<dbReference type="eggNOG" id="KOG3140">
    <property type="taxonomic scope" value="Eukaryota"/>
</dbReference>
<dbReference type="HOGENOM" id="CLU_041954_0_0_1"/>
<dbReference type="InParanoid" id="Q4WQJ2"/>
<dbReference type="OMA" id="YHDEFTD"/>
<dbReference type="OrthoDB" id="166803at2759"/>
<dbReference type="Proteomes" id="UP000002530">
    <property type="component" value="Chromosome 4"/>
</dbReference>
<dbReference type="GO" id="GO:0000139">
    <property type="term" value="C:Golgi membrane"/>
    <property type="evidence" value="ECO:0000318"/>
    <property type="project" value="GO_Central"/>
</dbReference>
<dbReference type="GO" id="GO:0000022">
    <property type="term" value="P:mitotic spindle elongation"/>
    <property type="evidence" value="ECO:0000318"/>
    <property type="project" value="GO_Central"/>
</dbReference>
<dbReference type="GO" id="GO:0016192">
    <property type="term" value="P:vesicle-mediated transport"/>
    <property type="evidence" value="ECO:0000318"/>
    <property type="project" value="GO_Central"/>
</dbReference>
<dbReference type="InterPro" id="IPR051076">
    <property type="entry name" value="Golgi_membrane_TVP38/TMEM64"/>
</dbReference>
<dbReference type="InterPro" id="IPR032816">
    <property type="entry name" value="VTT_dom"/>
</dbReference>
<dbReference type="PANTHER" id="PTHR47549:SF1">
    <property type="entry name" value="GOLGI APPARATUS MEMBRANE PROTEIN TVP38"/>
    <property type="match status" value="1"/>
</dbReference>
<dbReference type="PANTHER" id="PTHR47549">
    <property type="entry name" value="GOLGI APPARATUS MEMBRANE PROTEIN TVP38-RELATED"/>
    <property type="match status" value="1"/>
</dbReference>
<dbReference type="Pfam" id="PF09335">
    <property type="entry name" value="VTT_dom"/>
    <property type="match status" value="1"/>
</dbReference>
<reference key="1">
    <citation type="journal article" date="2005" name="Nature">
        <title>Genomic sequence of the pathogenic and allergenic filamentous fungus Aspergillus fumigatus.</title>
        <authorList>
            <person name="Nierman W.C."/>
            <person name="Pain A."/>
            <person name="Anderson M.J."/>
            <person name="Wortman J.R."/>
            <person name="Kim H.S."/>
            <person name="Arroyo J."/>
            <person name="Berriman M."/>
            <person name="Abe K."/>
            <person name="Archer D.B."/>
            <person name="Bermejo C."/>
            <person name="Bennett J.W."/>
            <person name="Bowyer P."/>
            <person name="Chen D."/>
            <person name="Collins M."/>
            <person name="Coulsen R."/>
            <person name="Davies R."/>
            <person name="Dyer P.S."/>
            <person name="Farman M.L."/>
            <person name="Fedorova N."/>
            <person name="Fedorova N.D."/>
            <person name="Feldblyum T.V."/>
            <person name="Fischer R."/>
            <person name="Fosker N."/>
            <person name="Fraser A."/>
            <person name="Garcia J.L."/>
            <person name="Garcia M.J."/>
            <person name="Goble A."/>
            <person name="Goldman G.H."/>
            <person name="Gomi K."/>
            <person name="Griffith-Jones S."/>
            <person name="Gwilliam R."/>
            <person name="Haas B.J."/>
            <person name="Haas H."/>
            <person name="Harris D.E."/>
            <person name="Horiuchi H."/>
            <person name="Huang J."/>
            <person name="Humphray S."/>
            <person name="Jimenez J."/>
            <person name="Keller N."/>
            <person name="Khouri H."/>
            <person name="Kitamoto K."/>
            <person name="Kobayashi T."/>
            <person name="Konzack S."/>
            <person name="Kulkarni R."/>
            <person name="Kumagai T."/>
            <person name="Lafton A."/>
            <person name="Latge J.-P."/>
            <person name="Li W."/>
            <person name="Lord A."/>
            <person name="Lu C."/>
            <person name="Majoros W.H."/>
            <person name="May G.S."/>
            <person name="Miller B.L."/>
            <person name="Mohamoud Y."/>
            <person name="Molina M."/>
            <person name="Monod M."/>
            <person name="Mouyna I."/>
            <person name="Mulligan S."/>
            <person name="Murphy L.D."/>
            <person name="O'Neil S."/>
            <person name="Paulsen I."/>
            <person name="Penalva M.A."/>
            <person name="Pertea M."/>
            <person name="Price C."/>
            <person name="Pritchard B.L."/>
            <person name="Quail M.A."/>
            <person name="Rabbinowitsch E."/>
            <person name="Rawlins N."/>
            <person name="Rajandream M.A."/>
            <person name="Reichard U."/>
            <person name="Renauld H."/>
            <person name="Robson G.D."/>
            <person name="Rodriguez de Cordoba S."/>
            <person name="Rodriguez-Pena J.M."/>
            <person name="Ronning C.M."/>
            <person name="Rutter S."/>
            <person name="Salzberg S.L."/>
            <person name="Sanchez M."/>
            <person name="Sanchez-Ferrero J.C."/>
            <person name="Saunders D."/>
            <person name="Seeger K."/>
            <person name="Squares R."/>
            <person name="Squares S."/>
            <person name="Takeuchi M."/>
            <person name="Tekaia F."/>
            <person name="Turner G."/>
            <person name="Vazquez de Aldana C.R."/>
            <person name="Weidman J."/>
            <person name="White O."/>
            <person name="Woodward J.R."/>
            <person name="Yu J.-H."/>
            <person name="Fraser C.M."/>
            <person name="Galagan J.E."/>
            <person name="Asai K."/>
            <person name="Machida M."/>
            <person name="Hall N."/>
            <person name="Barrell B.G."/>
            <person name="Denning D.W."/>
        </authorList>
    </citation>
    <scope>NUCLEOTIDE SEQUENCE [LARGE SCALE GENOMIC DNA]</scope>
    <source>
        <strain>ATCC MYA-4609 / CBS 101355 / FGSC A1100 / Af293</strain>
    </source>
</reference>
<sequence length="418" mass="46735">MPADYTSTARALSLPMSPAESLSPAEEDTRPLWSHLASSRRNTASPSVRESTGLRDQVVNQATKMLRRTKKTWRRLTFWQRIGAIGAALLAILLGLSFMIFTGQVFFWLGPVAEKWEQSWLAFFVLWLCVFFVSFPPLVGWSTFGTISGFIYGIWKGWILYATATVLGSTCSFIVSRTILSKFVNRMMERDKRFAALALTLKYDGLKLLCMIRLCPLPYSVCNGAVSTFPTVHPLMYGLATALITPKLLVPAFIGSRIRILSEKNEEMSAASKAVNICSIILTIGIGVFTGWYIYRRTLARAKELEAKERADIRRSLEADHAAHRPHGSFSEDPDVNTAATTLARDEEERIGFNDFDDDNVDLVIDDDSGSEISPNLTKKQFPGPYRDEFTDNDSDVFGDGDGPDSQMFRLHTHVRSG</sequence>
<feature type="chain" id="PRO_0000343062" description="Golgi apparatus membrane protein tvp38">
    <location>
        <begin position="1"/>
        <end position="418"/>
    </location>
</feature>
<feature type="topological domain" description="Lumenal" evidence="2">
    <location>
        <begin position="1"/>
        <end position="81"/>
    </location>
</feature>
<feature type="transmembrane region" description="Helical" evidence="2">
    <location>
        <begin position="82"/>
        <end position="102"/>
    </location>
</feature>
<feature type="topological domain" description="Cytoplasmic" evidence="2">
    <location>
        <begin position="103"/>
        <end position="119"/>
    </location>
</feature>
<feature type="transmembrane region" description="Helical" evidence="2">
    <location>
        <begin position="120"/>
        <end position="140"/>
    </location>
</feature>
<feature type="topological domain" description="Lumenal" evidence="2">
    <location>
        <begin position="141"/>
        <end position="157"/>
    </location>
</feature>
<feature type="transmembrane region" description="Helical" evidence="2">
    <location>
        <begin position="158"/>
        <end position="180"/>
    </location>
</feature>
<feature type="topological domain" description="Cytoplasmic" evidence="2">
    <location>
        <begin position="181"/>
        <end position="234"/>
    </location>
</feature>
<feature type="transmembrane region" description="Helical" evidence="2">
    <location>
        <begin position="235"/>
        <end position="255"/>
    </location>
</feature>
<feature type="topological domain" description="Lumenal" evidence="2">
    <location>
        <begin position="256"/>
        <end position="273"/>
    </location>
</feature>
<feature type="transmembrane region" description="Helical" evidence="2">
    <location>
        <begin position="274"/>
        <end position="294"/>
    </location>
</feature>
<feature type="topological domain" description="Cytoplasmic" evidence="2">
    <location>
        <begin position="295"/>
        <end position="418"/>
    </location>
</feature>
<feature type="region of interest" description="Disordered" evidence="3">
    <location>
        <begin position="1"/>
        <end position="26"/>
    </location>
</feature>
<feature type="region of interest" description="VTT domain" evidence="1">
    <location>
        <begin position="149"/>
        <end position="258"/>
    </location>
</feature>
<feature type="region of interest" description="Disordered" evidence="3">
    <location>
        <begin position="367"/>
        <end position="388"/>
    </location>
</feature>
<feature type="compositionally biased region" description="Polar residues" evidence="3">
    <location>
        <begin position="1"/>
        <end position="10"/>
    </location>
</feature>
<evidence type="ECO:0000250" key="1">
    <source>
        <dbReference type="UniProtKB" id="P36164"/>
    </source>
</evidence>
<evidence type="ECO:0000255" key="2"/>
<evidence type="ECO:0000256" key="3">
    <source>
        <dbReference type="SAM" id="MobiDB-lite"/>
    </source>
</evidence>
<evidence type="ECO:0000305" key="4"/>
<keyword id="KW-0333">Golgi apparatus</keyword>
<keyword id="KW-0472">Membrane</keyword>
<keyword id="KW-1185">Reference proteome</keyword>
<keyword id="KW-0812">Transmembrane</keyword>
<keyword id="KW-1133">Transmembrane helix</keyword>